<name>SAFA_ECOLC</name>
<evidence type="ECO:0000250" key="1"/>
<evidence type="ECO:0000255" key="2"/>
<evidence type="ECO:0000305" key="3"/>
<organism>
    <name type="scientific">Escherichia coli (strain ATCC 8739 / DSM 1576 / NBRC 3972 / NCIMB 8545 / WDCM 00012 / Crooks)</name>
    <dbReference type="NCBI Taxonomy" id="481805"/>
    <lineage>
        <taxon>Bacteria</taxon>
        <taxon>Pseudomonadati</taxon>
        <taxon>Pseudomonadota</taxon>
        <taxon>Gammaproteobacteria</taxon>
        <taxon>Enterobacterales</taxon>
        <taxon>Enterobacteriaceae</taxon>
        <taxon>Escherichia</taxon>
    </lineage>
</organism>
<sequence>MHATTVKNKITQRDNYKEIMSAIVVVLLLTLTLIAIFSAIDQLSISEMGRIARDLTHFIINSLQG</sequence>
<feature type="chain" id="PRO_0000340086" description="Two-component-system connector protein SafA">
    <location>
        <begin position="1"/>
        <end position="65"/>
    </location>
</feature>
<feature type="topological domain" description="Cytoplasmic" evidence="1">
    <location>
        <begin position="1"/>
        <end position="18"/>
    </location>
</feature>
<feature type="transmembrane region" description="Helical; Signal-anchor for type II membrane protein" evidence="2">
    <location>
        <begin position="19"/>
        <end position="39"/>
    </location>
</feature>
<feature type="topological domain" description="Periplasmic" evidence="1">
    <location>
        <begin position="40"/>
        <end position="65"/>
    </location>
</feature>
<keyword id="KW-0997">Cell inner membrane</keyword>
<keyword id="KW-1003">Cell membrane</keyword>
<keyword id="KW-0472">Membrane</keyword>
<keyword id="KW-0735">Signal-anchor</keyword>
<keyword id="KW-0346">Stress response</keyword>
<keyword id="KW-0812">Transmembrane</keyword>
<keyword id="KW-1133">Transmembrane helix</keyword>
<gene>
    <name type="primary">safA</name>
    <name type="ordered locus">EcolC_2157</name>
</gene>
<proteinExistence type="inferred from homology"/>
<accession>B1IRV8</accession>
<protein>
    <recommendedName>
        <fullName>Two-component-system connector protein SafA</fullName>
    </recommendedName>
</protein>
<comment type="function">
    <text evidence="1">Connects the signal transduction between the two-component systems EvgS/EvgA and PhoQ/PhoP, by directly interacting with PhoQ and thus activating the PhoQ/PhoP system, in response to acid stress conditions.</text>
</comment>
<comment type="subunit">
    <text evidence="1">Interacts with PhoQ.</text>
</comment>
<comment type="subcellular location">
    <subcellularLocation>
        <location evidence="1">Cell inner membrane</location>
        <topology evidence="1">Single-pass type II membrane protein</topology>
    </subcellularLocation>
</comment>
<comment type="induction">
    <text evidence="1">By acid stress, via the EvgS/EvgA system.</text>
</comment>
<comment type="similarity">
    <text evidence="3">Belongs to the SafA family.</text>
</comment>
<reference key="1">
    <citation type="submission" date="2008-02" db="EMBL/GenBank/DDBJ databases">
        <title>Complete sequence of Escherichia coli C str. ATCC 8739.</title>
        <authorList>
            <person name="Copeland A."/>
            <person name="Lucas S."/>
            <person name="Lapidus A."/>
            <person name="Glavina del Rio T."/>
            <person name="Dalin E."/>
            <person name="Tice H."/>
            <person name="Bruce D."/>
            <person name="Goodwin L."/>
            <person name="Pitluck S."/>
            <person name="Kiss H."/>
            <person name="Brettin T."/>
            <person name="Detter J.C."/>
            <person name="Han C."/>
            <person name="Kuske C.R."/>
            <person name="Schmutz J."/>
            <person name="Larimer F."/>
            <person name="Land M."/>
            <person name="Hauser L."/>
            <person name="Kyrpides N."/>
            <person name="Mikhailova N."/>
            <person name="Ingram L."/>
            <person name="Richardson P."/>
        </authorList>
    </citation>
    <scope>NUCLEOTIDE SEQUENCE [LARGE SCALE GENOMIC DNA]</scope>
    <source>
        <strain>ATCC 8739 / DSM 1576 / NBRC 3972 / NCIMB 8545 / WDCM 00012 / Crooks</strain>
    </source>
</reference>
<dbReference type="EMBL" id="CP000946">
    <property type="protein sequence ID" value="ACA77796.1"/>
    <property type="molecule type" value="Genomic_DNA"/>
</dbReference>
<dbReference type="RefSeq" id="WP_000543384.1">
    <property type="nucleotide sequence ID" value="NZ_MTFT01000006.1"/>
</dbReference>
<dbReference type="SMR" id="B1IRV8"/>
<dbReference type="KEGG" id="ecl:EcolC_2157"/>
<dbReference type="HOGENOM" id="CLU_2842804_0_0_6"/>
<dbReference type="GO" id="GO:0005886">
    <property type="term" value="C:plasma membrane"/>
    <property type="evidence" value="ECO:0007669"/>
    <property type="project" value="UniProtKB-SubCell"/>
</dbReference>
<dbReference type="InterPro" id="IPR031411">
    <property type="entry name" value="SafA"/>
</dbReference>
<dbReference type="Pfam" id="PF17073">
    <property type="entry name" value="SafA"/>
    <property type="match status" value="1"/>
</dbReference>